<reference key="1">
    <citation type="journal article" date="2011" name="BMC Genomics">
        <title>Complete genome sequence of the filamentous anoxygenic phototrophic bacterium Chloroflexus aurantiacus.</title>
        <authorList>
            <person name="Tang K.H."/>
            <person name="Barry K."/>
            <person name="Chertkov O."/>
            <person name="Dalin E."/>
            <person name="Han C.S."/>
            <person name="Hauser L.J."/>
            <person name="Honchak B.M."/>
            <person name="Karbach L.E."/>
            <person name="Land M.L."/>
            <person name="Lapidus A."/>
            <person name="Larimer F.W."/>
            <person name="Mikhailova N."/>
            <person name="Pitluck S."/>
            <person name="Pierson B.K."/>
            <person name="Blankenship R.E."/>
        </authorList>
    </citation>
    <scope>NUCLEOTIDE SEQUENCE [LARGE SCALE GENOMIC DNA]</scope>
    <source>
        <strain>ATCC 29366 / DSM 635 / J-10-fl</strain>
    </source>
</reference>
<name>MNME_CHLAA</name>
<sequence length="452" mass="47166">MNDTIAAIATPPGEGGIGIIRLSGPDAQSIALRIFRPVRPGRLRSHRVRYGHVIGPDGEVIDEALLTLMAAPHSFTREDVVEISCHGGALPVQLTLEAALAAGARLANPGEFTLRAFLNGRIDLSQAEATLDVIRAQTSAGLAIAQAQLGGWLAREVRAARTAILEPLAYITALIDFPEEGIEPQTVAGPIEQALATVERLLAGADQGMVLRNGARVVLVGRPNVGKSSLLNALLRVERAIVTPIPGTTRDTLEEMANLAGVPVVLIDTAGMRTSTDPVEQIGVERAAAALAGADLALLVFDSSQPFTPEDEAMLVATADRPTIIVWNKCDDPDVPPPPAPPHPKAMAVVACSARYGHGIDTLAKTIATTLLGGTLPAVGATHLVSNPRHRAALRRAAEFLRAAQETLAAGAATDLLAADLTGAANALGEITGETVGEDLLDMIFSRFCIGK</sequence>
<organism>
    <name type="scientific">Chloroflexus aurantiacus (strain ATCC 29366 / DSM 635 / J-10-fl)</name>
    <dbReference type="NCBI Taxonomy" id="324602"/>
    <lineage>
        <taxon>Bacteria</taxon>
        <taxon>Bacillati</taxon>
        <taxon>Chloroflexota</taxon>
        <taxon>Chloroflexia</taxon>
        <taxon>Chloroflexales</taxon>
        <taxon>Chloroflexineae</taxon>
        <taxon>Chloroflexaceae</taxon>
        <taxon>Chloroflexus</taxon>
    </lineage>
</organism>
<gene>
    <name evidence="1" type="primary">mnmE</name>
    <name evidence="1" type="synonym">trmE</name>
    <name type="ordered locus">Caur_2820</name>
</gene>
<accession>A9WKE3</accession>
<proteinExistence type="inferred from homology"/>
<comment type="function">
    <text evidence="1">Exhibits a very high intrinsic GTPase hydrolysis rate. Involved in the addition of a carboxymethylaminomethyl (cmnm) group at the wobble position (U34) of certain tRNAs, forming tRNA-cmnm(5)s(2)U34.</text>
</comment>
<comment type="cofactor">
    <cofactor evidence="1">
        <name>K(+)</name>
        <dbReference type="ChEBI" id="CHEBI:29103"/>
    </cofactor>
    <text evidence="1">Binds 1 potassium ion per subunit.</text>
</comment>
<comment type="subunit">
    <text evidence="1">Homodimer. Heterotetramer of two MnmE and two MnmG subunits.</text>
</comment>
<comment type="subcellular location">
    <subcellularLocation>
        <location evidence="1">Cytoplasm</location>
    </subcellularLocation>
</comment>
<comment type="similarity">
    <text evidence="1">Belongs to the TRAFAC class TrmE-Era-EngA-EngB-Septin-like GTPase superfamily. TrmE GTPase family.</text>
</comment>
<evidence type="ECO:0000255" key="1">
    <source>
        <dbReference type="HAMAP-Rule" id="MF_00379"/>
    </source>
</evidence>
<protein>
    <recommendedName>
        <fullName evidence="1">tRNA modification GTPase MnmE</fullName>
        <ecNumber evidence="1">3.6.-.-</ecNumber>
    </recommendedName>
</protein>
<feature type="chain" id="PRO_0000345760" description="tRNA modification GTPase MnmE">
    <location>
        <begin position="1"/>
        <end position="452"/>
    </location>
</feature>
<feature type="domain" description="TrmE-type G">
    <location>
        <begin position="214"/>
        <end position="372"/>
    </location>
</feature>
<feature type="binding site" evidence="1">
    <location>
        <position position="21"/>
    </location>
    <ligand>
        <name>(6S)-5-formyl-5,6,7,8-tetrahydrofolate</name>
        <dbReference type="ChEBI" id="CHEBI:57457"/>
    </ligand>
</feature>
<feature type="binding site" evidence="1">
    <location>
        <position position="82"/>
    </location>
    <ligand>
        <name>(6S)-5-formyl-5,6,7,8-tetrahydrofolate</name>
        <dbReference type="ChEBI" id="CHEBI:57457"/>
    </ligand>
</feature>
<feature type="binding site" evidence="1">
    <location>
        <position position="121"/>
    </location>
    <ligand>
        <name>(6S)-5-formyl-5,6,7,8-tetrahydrofolate</name>
        <dbReference type="ChEBI" id="CHEBI:57457"/>
    </ligand>
</feature>
<feature type="binding site" evidence="1">
    <location>
        <begin position="224"/>
        <end position="229"/>
    </location>
    <ligand>
        <name>GTP</name>
        <dbReference type="ChEBI" id="CHEBI:37565"/>
    </ligand>
</feature>
<feature type="binding site" evidence="1">
    <location>
        <position position="224"/>
    </location>
    <ligand>
        <name>K(+)</name>
        <dbReference type="ChEBI" id="CHEBI:29103"/>
    </ligand>
</feature>
<feature type="binding site" evidence="1">
    <location>
        <position position="228"/>
    </location>
    <ligand>
        <name>Mg(2+)</name>
        <dbReference type="ChEBI" id="CHEBI:18420"/>
    </ligand>
</feature>
<feature type="binding site" evidence="1">
    <location>
        <begin position="243"/>
        <end position="249"/>
    </location>
    <ligand>
        <name>GTP</name>
        <dbReference type="ChEBI" id="CHEBI:37565"/>
    </ligand>
</feature>
<feature type="binding site" evidence="1">
    <location>
        <position position="243"/>
    </location>
    <ligand>
        <name>K(+)</name>
        <dbReference type="ChEBI" id="CHEBI:29103"/>
    </ligand>
</feature>
<feature type="binding site" evidence="1">
    <location>
        <position position="245"/>
    </location>
    <ligand>
        <name>K(+)</name>
        <dbReference type="ChEBI" id="CHEBI:29103"/>
    </ligand>
</feature>
<feature type="binding site" evidence="1">
    <location>
        <position position="248"/>
    </location>
    <ligand>
        <name>K(+)</name>
        <dbReference type="ChEBI" id="CHEBI:29103"/>
    </ligand>
</feature>
<feature type="binding site" evidence="1">
    <location>
        <position position="249"/>
    </location>
    <ligand>
        <name>Mg(2+)</name>
        <dbReference type="ChEBI" id="CHEBI:18420"/>
    </ligand>
</feature>
<feature type="binding site" evidence="1">
    <location>
        <begin position="268"/>
        <end position="271"/>
    </location>
    <ligand>
        <name>GTP</name>
        <dbReference type="ChEBI" id="CHEBI:37565"/>
    </ligand>
</feature>
<feature type="binding site" evidence="1">
    <location>
        <begin position="353"/>
        <end position="355"/>
    </location>
    <ligand>
        <name>GTP</name>
        <dbReference type="ChEBI" id="CHEBI:37565"/>
    </ligand>
</feature>
<feature type="binding site" evidence="1">
    <location>
        <position position="452"/>
    </location>
    <ligand>
        <name>(6S)-5-formyl-5,6,7,8-tetrahydrofolate</name>
        <dbReference type="ChEBI" id="CHEBI:57457"/>
    </ligand>
</feature>
<keyword id="KW-0963">Cytoplasm</keyword>
<keyword id="KW-0342">GTP-binding</keyword>
<keyword id="KW-0378">Hydrolase</keyword>
<keyword id="KW-0460">Magnesium</keyword>
<keyword id="KW-0479">Metal-binding</keyword>
<keyword id="KW-0547">Nucleotide-binding</keyword>
<keyword id="KW-0630">Potassium</keyword>
<keyword id="KW-1185">Reference proteome</keyword>
<keyword id="KW-0819">tRNA processing</keyword>
<dbReference type="EC" id="3.6.-.-" evidence="1"/>
<dbReference type="EMBL" id="CP000909">
    <property type="protein sequence ID" value="ABY36021.1"/>
    <property type="molecule type" value="Genomic_DNA"/>
</dbReference>
<dbReference type="RefSeq" id="WP_012258674.1">
    <property type="nucleotide sequence ID" value="NC_010175.1"/>
</dbReference>
<dbReference type="RefSeq" id="YP_001636410.1">
    <property type="nucleotide sequence ID" value="NC_010175.1"/>
</dbReference>
<dbReference type="SMR" id="A9WKE3"/>
<dbReference type="FunCoup" id="A9WKE3">
    <property type="interactions" value="466"/>
</dbReference>
<dbReference type="STRING" id="324602.Caur_2820"/>
<dbReference type="EnsemblBacteria" id="ABY36021">
    <property type="protein sequence ID" value="ABY36021"/>
    <property type="gene ID" value="Caur_2820"/>
</dbReference>
<dbReference type="KEGG" id="cau:Caur_2820"/>
<dbReference type="PATRIC" id="fig|324602.8.peg.3175"/>
<dbReference type="eggNOG" id="COG0486">
    <property type="taxonomic scope" value="Bacteria"/>
</dbReference>
<dbReference type="HOGENOM" id="CLU_019624_4_1_0"/>
<dbReference type="InParanoid" id="A9WKE3"/>
<dbReference type="Proteomes" id="UP000002008">
    <property type="component" value="Chromosome"/>
</dbReference>
<dbReference type="GO" id="GO:0005737">
    <property type="term" value="C:cytoplasm"/>
    <property type="evidence" value="ECO:0000318"/>
    <property type="project" value="GO_Central"/>
</dbReference>
<dbReference type="GO" id="GO:0005829">
    <property type="term" value="C:cytosol"/>
    <property type="evidence" value="ECO:0000318"/>
    <property type="project" value="GO_Central"/>
</dbReference>
<dbReference type="GO" id="GO:0005525">
    <property type="term" value="F:GTP binding"/>
    <property type="evidence" value="ECO:0007669"/>
    <property type="project" value="UniProtKB-UniRule"/>
</dbReference>
<dbReference type="GO" id="GO:0003924">
    <property type="term" value="F:GTPase activity"/>
    <property type="evidence" value="ECO:0007669"/>
    <property type="project" value="UniProtKB-UniRule"/>
</dbReference>
<dbReference type="GO" id="GO:0046872">
    <property type="term" value="F:metal ion binding"/>
    <property type="evidence" value="ECO:0007669"/>
    <property type="project" value="UniProtKB-KW"/>
</dbReference>
<dbReference type="GO" id="GO:0030488">
    <property type="term" value="P:tRNA methylation"/>
    <property type="evidence" value="ECO:0000318"/>
    <property type="project" value="GO_Central"/>
</dbReference>
<dbReference type="GO" id="GO:0002098">
    <property type="term" value="P:tRNA wobble uridine modification"/>
    <property type="evidence" value="ECO:0000318"/>
    <property type="project" value="GO_Central"/>
</dbReference>
<dbReference type="CDD" id="cd04164">
    <property type="entry name" value="trmE"/>
    <property type="match status" value="1"/>
</dbReference>
<dbReference type="CDD" id="cd14858">
    <property type="entry name" value="TrmE_N"/>
    <property type="match status" value="1"/>
</dbReference>
<dbReference type="FunFam" id="3.30.1360.120:FF:000003">
    <property type="entry name" value="tRNA modification GTPase MnmE"/>
    <property type="match status" value="1"/>
</dbReference>
<dbReference type="FunFam" id="3.40.50.300:FF:001376">
    <property type="entry name" value="tRNA modification GTPase MnmE"/>
    <property type="match status" value="1"/>
</dbReference>
<dbReference type="Gene3D" id="3.40.50.300">
    <property type="entry name" value="P-loop containing nucleotide triphosphate hydrolases"/>
    <property type="match status" value="1"/>
</dbReference>
<dbReference type="Gene3D" id="3.30.1360.120">
    <property type="entry name" value="Probable tRNA modification gtpase trme, domain 1"/>
    <property type="match status" value="1"/>
</dbReference>
<dbReference type="Gene3D" id="1.20.120.430">
    <property type="entry name" value="tRNA modification GTPase MnmE domain 2"/>
    <property type="match status" value="1"/>
</dbReference>
<dbReference type="HAMAP" id="MF_00379">
    <property type="entry name" value="GTPase_MnmE"/>
    <property type="match status" value="1"/>
</dbReference>
<dbReference type="InterPro" id="IPR031168">
    <property type="entry name" value="G_TrmE"/>
</dbReference>
<dbReference type="InterPro" id="IPR006073">
    <property type="entry name" value="GTP-bd"/>
</dbReference>
<dbReference type="InterPro" id="IPR018948">
    <property type="entry name" value="GTP-bd_TrmE_N"/>
</dbReference>
<dbReference type="InterPro" id="IPR004520">
    <property type="entry name" value="GTPase_MnmE"/>
</dbReference>
<dbReference type="InterPro" id="IPR027368">
    <property type="entry name" value="MnmE_dom2"/>
</dbReference>
<dbReference type="InterPro" id="IPR025867">
    <property type="entry name" value="MnmE_helical"/>
</dbReference>
<dbReference type="InterPro" id="IPR027417">
    <property type="entry name" value="P-loop_NTPase"/>
</dbReference>
<dbReference type="InterPro" id="IPR005225">
    <property type="entry name" value="Small_GTP-bd"/>
</dbReference>
<dbReference type="InterPro" id="IPR027266">
    <property type="entry name" value="TrmE/GcvT_dom1"/>
</dbReference>
<dbReference type="NCBIfam" id="TIGR00450">
    <property type="entry name" value="mnmE_trmE_thdF"/>
    <property type="match status" value="1"/>
</dbReference>
<dbReference type="NCBIfam" id="TIGR00231">
    <property type="entry name" value="small_GTP"/>
    <property type="match status" value="1"/>
</dbReference>
<dbReference type="PANTHER" id="PTHR42714">
    <property type="entry name" value="TRNA MODIFICATION GTPASE GTPBP3"/>
    <property type="match status" value="1"/>
</dbReference>
<dbReference type="PANTHER" id="PTHR42714:SF2">
    <property type="entry name" value="TRNA MODIFICATION GTPASE GTPBP3, MITOCHONDRIAL"/>
    <property type="match status" value="1"/>
</dbReference>
<dbReference type="Pfam" id="PF01926">
    <property type="entry name" value="MMR_HSR1"/>
    <property type="match status" value="1"/>
</dbReference>
<dbReference type="Pfam" id="PF12631">
    <property type="entry name" value="MnmE_helical"/>
    <property type="match status" value="1"/>
</dbReference>
<dbReference type="Pfam" id="PF10396">
    <property type="entry name" value="TrmE_N"/>
    <property type="match status" value="1"/>
</dbReference>
<dbReference type="SUPFAM" id="SSF52540">
    <property type="entry name" value="P-loop containing nucleoside triphosphate hydrolases"/>
    <property type="match status" value="1"/>
</dbReference>
<dbReference type="PROSITE" id="PS51709">
    <property type="entry name" value="G_TRME"/>
    <property type="match status" value="1"/>
</dbReference>